<protein>
    <recommendedName>
        <fullName evidence="1">Adapter protein MecA</fullName>
    </recommendedName>
</protein>
<gene>
    <name evidence="1" type="primary">mecA</name>
    <name type="ordered locus">SPy_0281</name>
    <name type="ordered locus">M5005_Spy0239</name>
</gene>
<proteinExistence type="inferred from homology"/>
<comment type="function">
    <text evidence="1">Enables the recognition and targeting of unfolded and aggregated proteins to the ClpC protease or to other proteins involved in proteolysis.</text>
</comment>
<comment type="subunit">
    <text evidence="1">Homodimer.</text>
</comment>
<comment type="domain">
    <text>The N-terminal domain probably binds unfolded/aggregated proteins; the C-terminal domain interacts with ClpC.</text>
</comment>
<comment type="similarity">
    <text evidence="1">Belongs to the MecA family.</text>
</comment>
<sequence length="253" mass="29052">MEMKQISETTLKITISMDDLEERGMELKDFLIPQEKTEEFFYSVMDELDLPDNFKDSGMLSFRVTPRKDRLDVFVTKSEINKDINLEDLAEFGDMSQMTPEDFFKSLEQSMREKGDVKAHEKLEKIEEIMEDVVEATLANQSEAADPSTNHESEPLDYVHYVLDFSTITEAVAFAKTIDFSIEASELYKGSNCYHMTILLDVQQQPSYFANVMYARLIEHANPGSKTRAYLQEHGLQLMLDGAVEQLQKIELG</sequence>
<keyword id="KW-1185">Reference proteome</keyword>
<reference key="1">
    <citation type="journal article" date="2001" name="Proc. Natl. Acad. Sci. U.S.A.">
        <title>Complete genome sequence of an M1 strain of Streptococcus pyogenes.</title>
        <authorList>
            <person name="Ferretti J.J."/>
            <person name="McShan W.M."/>
            <person name="Ajdic D.J."/>
            <person name="Savic D.J."/>
            <person name="Savic G."/>
            <person name="Lyon K."/>
            <person name="Primeaux C."/>
            <person name="Sezate S."/>
            <person name="Suvorov A.N."/>
            <person name="Kenton S."/>
            <person name="Lai H.S."/>
            <person name="Lin S.P."/>
            <person name="Qian Y."/>
            <person name="Jia H.G."/>
            <person name="Najar F.Z."/>
            <person name="Ren Q."/>
            <person name="Zhu H."/>
            <person name="Song L."/>
            <person name="White J."/>
            <person name="Yuan X."/>
            <person name="Clifton S.W."/>
            <person name="Roe B.A."/>
            <person name="McLaughlin R.E."/>
        </authorList>
    </citation>
    <scope>NUCLEOTIDE SEQUENCE [LARGE SCALE GENOMIC DNA]</scope>
    <source>
        <strain>ATCC 700294 / SF370 / Serotype M1</strain>
    </source>
</reference>
<reference key="2">
    <citation type="journal article" date="2005" name="J. Infect. Dis.">
        <title>Evolutionary origin and emergence of a highly successful clone of serotype M1 group A Streptococcus involved multiple horizontal gene transfer events.</title>
        <authorList>
            <person name="Sumby P."/>
            <person name="Porcella S.F."/>
            <person name="Madrigal A.G."/>
            <person name="Barbian K.D."/>
            <person name="Virtaneva K."/>
            <person name="Ricklefs S.M."/>
            <person name="Sturdevant D.E."/>
            <person name="Graham M.R."/>
            <person name="Vuopio-Varkila J."/>
            <person name="Hoe N.P."/>
            <person name="Musser J.M."/>
        </authorList>
    </citation>
    <scope>NUCLEOTIDE SEQUENCE [LARGE SCALE GENOMIC DNA]</scope>
    <source>
        <strain>ATCC BAA-947 / MGAS5005 / Serotype M1</strain>
    </source>
</reference>
<name>MECA_STRP1</name>
<accession>P60187</accession>
<accession>Q490W0</accession>
<accession>Q9A1G7</accession>
<dbReference type="EMBL" id="AE004092">
    <property type="protein sequence ID" value="AAK33353.1"/>
    <property type="molecule type" value="Genomic_DNA"/>
</dbReference>
<dbReference type="EMBL" id="CP000017">
    <property type="protein sequence ID" value="AAZ50858.1"/>
    <property type="molecule type" value="Genomic_DNA"/>
</dbReference>
<dbReference type="RefSeq" id="NP_268632.1">
    <property type="nucleotide sequence ID" value="NC_002737.2"/>
</dbReference>
<dbReference type="SMR" id="P60187"/>
<dbReference type="PaxDb" id="1314-HKU360_00279"/>
<dbReference type="KEGG" id="spy:SPy_0281"/>
<dbReference type="KEGG" id="spz:M5005_Spy0239"/>
<dbReference type="PATRIC" id="fig|160490.10.peg.247"/>
<dbReference type="HOGENOM" id="CLU_071496_1_0_9"/>
<dbReference type="OMA" id="EFFYTVM"/>
<dbReference type="Proteomes" id="UP000000750">
    <property type="component" value="Chromosome"/>
</dbReference>
<dbReference type="GO" id="GO:0030674">
    <property type="term" value="F:protein-macromolecule adaptor activity"/>
    <property type="evidence" value="ECO:0007669"/>
    <property type="project" value="UniProtKB-UniRule"/>
</dbReference>
<dbReference type="Gene3D" id="3.30.70.1950">
    <property type="match status" value="1"/>
</dbReference>
<dbReference type="HAMAP" id="MF_01124">
    <property type="entry name" value="MecA"/>
    <property type="match status" value="1"/>
</dbReference>
<dbReference type="InterPro" id="IPR038471">
    <property type="entry name" value="MecA_C_sf"/>
</dbReference>
<dbReference type="InterPro" id="IPR008681">
    <property type="entry name" value="Neg-reg_MecA"/>
</dbReference>
<dbReference type="NCBIfam" id="NF002643">
    <property type="entry name" value="PRK02315.1-4"/>
    <property type="match status" value="1"/>
</dbReference>
<dbReference type="PANTHER" id="PTHR39161">
    <property type="entry name" value="ADAPTER PROTEIN MECA"/>
    <property type="match status" value="1"/>
</dbReference>
<dbReference type="PANTHER" id="PTHR39161:SF1">
    <property type="entry name" value="ADAPTER PROTEIN MECA 1"/>
    <property type="match status" value="1"/>
</dbReference>
<dbReference type="Pfam" id="PF05389">
    <property type="entry name" value="MecA"/>
    <property type="match status" value="1"/>
</dbReference>
<dbReference type="PIRSF" id="PIRSF029008">
    <property type="entry name" value="MecA"/>
    <property type="match status" value="1"/>
</dbReference>
<feature type="chain" id="PRO_0000212291" description="Adapter protein MecA">
    <location>
        <begin position="1"/>
        <end position="253"/>
    </location>
</feature>
<evidence type="ECO:0000255" key="1">
    <source>
        <dbReference type="HAMAP-Rule" id="MF_01124"/>
    </source>
</evidence>
<organism>
    <name type="scientific">Streptococcus pyogenes serotype M1</name>
    <dbReference type="NCBI Taxonomy" id="301447"/>
    <lineage>
        <taxon>Bacteria</taxon>
        <taxon>Bacillati</taxon>
        <taxon>Bacillota</taxon>
        <taxon>Bacilli</taxon>
        <taxon>Lactobacillales</taxon>
        <taxon>Streptococcaceae</taxon>
        <taxon>Streptococcus</taxon>
    </lineage>
</organism>